<protein>
    <recommendedName>
        <fullName evidence="1">Thymidylate kinase</fullName>
        <ecNumber evidence="1">2.7.4.9</ecNumber>
    </recommendedName>
    <alternativeName>
        <fullName evidence="1">dTMP kinase</fullName>
    </alternativeName>
</protein>
<accession>A1APK9</accession>
<organism>
    <name type="scientific">Pelobacter propionicus (strain DSM 2379 / NBRC 103807 / OttBd1)</name>
    <dbReference type="NCBI Taxonomy" id="338966"/>
    <lineage>
        <taxon>Bacteria</taxon>
        <taxon>Pseudomonadati</taxon>
        <taxon>Thermodesulfobacteriota</taxon>
        <taxon>Desulfuromonadia</taxon>
        <taxon>Desulfuromonadales</taxon>
        <taxon>Desulfuromonadaceae</taxon>
        <taxon>Pelobacter</taxon>
    </lineage>
</organism>
<sequence length="219" mass="23919">MGYFITFEGIEGSGKTTQIGLLGEQLESLGYSVVMTREPGGCAISDKIRSILLDADNSSISPMTELLLYAAARAQHVSEVIIPALKQGNIVLCDRFSDATLAYQGSGRGIAREKVDTLNQLACQSLRPDLTVLIDCDVSVGLERARRRIETASGPREERFELEALEFHRSVREAYLELAHAEPQRFITVDGSGGVEEISEAIVAQVLQNRLNNTSHALL</sequence>
<dbReference type="EC" id="2.7.4.9" evidence="1"/>
<dbReference type="EMBL" id="CP000482">
    <property type="protein sequence ID" value="ABK99279.1"/>
    <property type="molecule type" value="Genomic_DNA"/>
</dbReference>
<dbReference type="RefSeq" id="WP_011735556.1">
    <property type="nucleotide sequence ID" value="NC_008609.1"/>
</dbReference>
<dbReference type="SMR" id="A1APK9"/>
<dbReference type="STRING" id="338966.Ppro_1665"/>
<dbReference type="KEGG" id="ppd:Ppro_1665"/>
<dbReference type="eggNOG" id="COG0125">
    <property type="taxonomic scope" value="Bacteria"/>
</dbReference>
<dbReference type="HOGENOM" id="CLU_049131_0_2_7"/>
<dbReference type="OrthoDB" id="9774907at2"/>
<dbReference type="Proteomes" id="UP000006732">
    <property type="component" value="Chromosome"/>
</dbReference>
<dbReference type="GO" id="GO:0005829">
    <property type="term" value="C:cytosol"/>
    <property type="evidence" value="ECO:0007669"/>
    <property type="project" value="TreeGrafter"/>
</dbReference>
<dbReference type="GO" id="GO:0005524">
    <property type="term" value="F:ATP binding"/>
    <property type="evidence" value="ECO:0007669"/>
    <property type="project" value="UniProtKB-UniRule"/>
</dbReference>
<dbReference type="GO" id="GO:0004798">
    <property type="term" value="F:dTMP kinase activity"/>
    <property type="evidence" value="ECO:0007669"/>
    <property type="project" value="UniProtKB-UniRule"/>
</dbReference>
<dbReference type="GO" id="GO:0006233">
    <property type="term" value="P:dTDP biosynthetic process"/>
    <property type="evidence" value="ECO:0007669"/>
    <property type="project" value="InterPro"/>
</dbReference>
<dbReference type="GO" id="GO:0006235">
    <property type="term" value="P:dTTP biosynthetic process"/>
    <property type="evidence" value="ECO:0007669"/>
    <property type="project" value="UniProtKB-UniRule"/>
</dbReference>
<dbReference type="GO" id="GO:0006227">
    <property type="term" value="P:dUDP biosynthetic process"/>
    <property type="evidence" value="ECO:0007669"/>
    <property type="project" value="TreeGrafter"/>
</dbReference>
<dbReference type="CDD" id="cd01672">
    <property type="entry name" value="TMPK"/>
    <property type="match status" value="1"/>
</dbReference>
<dbReference type="FunFam" id="3.40.50.300:FF:000225">
    <property type="entry name" value="Thymidylate kinase"/>
    <property type="match status" value="1"/>
</dbReference>
<dbReference type="Gene3D" id="3.40.50.300">
    <property type="entry name" value="P-loop containing nucleotide triphosphate hydrolases"/>
    <property type="match status" value="1"/>
</dbReference>
<dbReference type="HAMAP" id="MF_00165">
    <property type="entry name" value="Thymidylate_kinase"/>
    <property type="match status" value="1"/>
</dbReference>
<dbReference type="InterPro" id="IPR027417">
    <property type="entry name" value="P-loop_NTPase"/>
</dbReference>
<dbReference type="InterPro" id="IPR039430">
    <property type="entry name" value="Thymidylate_kin-like_dom"/>
</dbReference>
<dbReference type="InterPro" id="IPR018094">
    <property type="entry name" value="Thymidylate_kinase"/>
</dbReference>
<dbReference type="NCBIfam" id="TIGR00041">
    <property type="entry name" value="DTMP_kinase"/>
    <property type="match status" value="1"/>
</dbReference>
<dbReference type="PANTHER" id="PTHR10344">
    <property type="entry name" value="THYMIDYLATE KINASE"/>
    <property type="match status" value="1"/>
</dbReference>
<dbReference type="PANTHER" id="PTHR10344:SF4">
    <property type="entry name" value="UMP-CMP KINASE 2, MITOCHONDRIAL"/>
    <property type="match status" value="1"/>
</dbReference>
<dbReference type="Pfam" id="PF02223">
    <property type="entry name" value="Thymidylate_kin"/>
    <property type="match status" value="1"/>
</dbReference>
<dbReference type="SUPFAM" id="SSF52540">
    <property type="entry name" value="P-loop containing nucleoside triphosphate hydrolases"/>
    <property type="match status" value="1"/>
</dbReference>
<evidence type="ECO:0000255" key="1">
    <source>
        <dbReference type="HAMAP-Rule" id="MF_00165"/>
    </source>
</evidence>
<reference key="1">
    <citation type="submission" date="2006-10" db="EMBL/GenBank/DDBJ databases">
        <title>Complete sequence of chromosome of Pelobacter propionicus DSM 2379.</title>
        <authorList>
            <consortium name="US DOE Joint Genome Institute"/>
            <person name="Copeland A."/>
            <person name="Lucas S."/>
            <person name="Lapidus A."/>
            <person name="Barry K."/>
            <person name="Detter J.C."/>
            <person name="Glavina del Rio T."/>
            <person name="Hammon N."/>
            <person name="Israni S."/>
            <person name="Dalin E."/>
            <person name="Tice H."/>
            <person name="Pitluck S."/>
            <person name="Saunders E."/>
            <person name="Brettin T."/>
            <person name="Bruce D."/>
            <person name="Han C."/>
            <person name="Tapia R."/>
            <person name="Schmutz J."/>
            <person name="Larimer F."/>
            <person name="Land M."/>
            <person name="Hauser L."/>
            <person name="Kyrpides N."/>
            <person name="Kim E."/>
            <person name="Lovley D."/>
            <person name="Richardson P."/>
        </authorList>
    </citation>
    <scope>NUCLEOTIDE SEQUENCE [LARGE SCALE GENOMIC DNA]</scope>
    <source>
        <strain>DSM 2379 / NBRC 103807 / OttBd1</strain>
    </source>
</reference>
<gene>
    <name evidence="1" type="primary">tmk</name>
    <name type="ordered locus">Ppro_1665</name>
</gene>
<feature type="chain" id="PRO_1000023243" description="Thymidylate kinase">
    <location>
        <begin position="1"/>
        <end position="219"/>
    </location>
</feature>
<feature type="binding site" evidence="1">
    <location>
        <begin position="9"/>
        <end position="16"/>
    </location>
    <ligand>
        <name>ATP</name>
        <dbReference type="ChEBI" id="CHEBI:30616"/>
    </ligand>
</feature>
<name>KTHY_PELPD</name>
<proteinExistence type="inferred from homology"/>
<comment type="function">
    <text evidence="1">Phosphorylation of dTMP to form dTDP in both de novo and salvage pathways of dTTP synthesis.</text>
</comment>
<comment type="catalytic activity">
    <reaction evidence="1">
        <text>dTMP + ATP = dTDP + ADP</text>
        <dbReference type="Rhea" id="RHEA:13517"/>
        <dbReference type="ChEBI" id="CHEBI:30616"/>
        <dbReference type="ChEBI" id="CHEBI:58369"/>
        <dbReference type="ChEBI" id="CHEBI:63528"/>
        <dbReference type="ChEBI" id="CHEBI:456216"/>
        <dbReference type="EC" id="2.7.4.9"/>
    </reaction>
</comment>
<comment type="similarity">
    <text evidence="1">Belongs to the thymidylate kinase family.</text>
</comment>
<keyword id="KW-0067">ATP-binding</keyword>
<keyword id="KW-0418">Kinase</keyword>
<keyword id="KW-0545">Nucleotide biosynthesis</keyword>
<keyword id="KW-0547">Nucleotide-binding</keyword>
<keyword id="KW-1185">Reference proteome</keyword>
<keyword id="KW-0808">Transferase</keyword>